<reference key="1">
    <citation type="journal article" date="2008" name="J. Bacteriol.">
        <title>Insights into the environmental resistance gene pool from the genome sequence of the multidrug-resistant environmental isolate Escherichia coli SMS-3-5.</title>
        <authorList>
            <person name="Fricke W.F."/>
            <person name="Wright M.S."/>
            <person name="Lindell A.H."/>
            <person name="Harkins D.M."/>
            <person name="Baker-Austin C."/>
            <person name="Ravel J."/>
            <person name="Stepanauskas R."/>
        </authorList>
    </citation>
    <scope>NUCLEOTIDE SEQUENCE [LARGE SCALE GENOMIC DNA]</scope>
    <source>
        <strain>SMS-3-5 / SECEC</strain>
    </source>
</reference>
<sequence length="136" mass="15597">MTSLSRPRVEFISTILQTVLNLGLLCLGLILVVFLGKETVHLADVLFAPEQTSKYELVEGLVVYFLYFEFIALIVKYFQSGFHFPLRYFVYIGITAIVRLIIVDHKSPLDVLIYSAAILLLVITLWLCNSKRLKRE</sequence>
<gene>
    <name evidence="1" type="primary">psiE</name>
    <name type="ordered locus">EcSMS35_4493</name>
</gene>
<evidence type="ECO:0000255" key="1">
    <source>
        <dbReference type="HAMAP-Rule" id="MF_01048"/>
    </source>
</evidence>
<name>PSIE_ECOSM</name>
<comment type="subcellular location">
    <subcellularLocation>
        <location evidence="1">Cell inner membrane</location>
        <topology evidence="1">Multi-pass membrane protein</topology>
    </subcellularLocation>
</comment>
<comment type="similarity">
    <text evidence="1">Belongs to the PsiE family.</text>
</comment>
<accession>B1LPJ6</accession>
<organism>
    <name type="scientific">Escherichia coli (strain SMS-3-5 / SECEC)</name>
    <dbReference type="NCBI Taxonomy" id="439855"/>
    <lineage>
        <taxon>Bacteria</taxon>
        <taxon>Pseudomonadati</taxon>
        <taxon>Pseudomonadota</taxon>
        <taxon>Gammaproteobacteria</taxon>
        <taxon>Enterobacterales</taxon>
        <taxon>Enterobacteriaceae</taxon>
        <taxon>Escherichia</taxon>
    </lineage>
</organism>
<feature type="chain" id="PRO_1000136214" description="Protein PsiE">
    <location>
        <begin position="1"/>
        <end position="136"/>
    </location>
</feature>
<feature type="transmembrane region" description="Helical" evidence="1">
    <location>
        <begin position="15"/>
        <end position="35"/>
    </location>
</feature>
<feature type="transmembrane region" description="Helical" evidence="1">
    <location>
        <begin position="55"/>
        <end position="75"/>
    </location>
</feature>
<feature type="transmembrane region" description="Helical" evidence="1">
    <location>
        <begin position="82"/>
        <end position="102"/>
    </location>
</feature>
<feature type="transmembrane region" description="Helical" evidence="1">
    <location>
        <begin position="108"/>
        <end position="128"/>
    </location>
</feature>
<dbReference type="EMBL" id="CP000970">
    <property type="protein sequence ID" value="ACB15976.1"/>
    <property type="molecule type" value="Genomic_DNA"/>
</dbReference>
<dbReference type="RefSeq" id="WP_000202902.1">
    <property type="nucleotide sequence ID" value="NC_010498.1"/>
</dbReference>
<dbReference type="SMR" id="B1LPJ6"/>
<dbReference type="GeneID" id="93777857"/>
<dbReference type="KEGG" id="ecm:EcSMS35_4493"/>
<dbReference type="HOGENOM" id="CLU_127561_0_1_6"/>
<dbReference type="Proteomes" id="UP000007011">
    <property type="component" value="Chromosome"/>
</dbReference>
<dbReference type="GO" id="GO:0005886">
    <property type="term" value="C:plasma membrane"/>
    <property type="evidence" value="ECO:0007669"/>
    <property type="project" value="UniProtKB-SubCell"/>
</dbReference>
<dbReference type="GO" id="GO:0016036">
    <property type="term" value="P:cellular response to phosphate starvation"/>
    <property type="evidence" value="ECO:0007669"/>
    <property type="project" value="InterPro"/>
</dbReference>
<dbReference type="HAMAP" id="MF_01048">
    <property type="entry name" value="PsiE"/>
    <property type="match status" value="1"/>
</dbReference>
<dbReference type="InterPro" id="IPR009315">
    <property type="entry name" value="P_starv_induced_PsiE"/>
</dbReference>
<dbReference type="InterPro" id="IPR020948">
    <property type="entry name" value="P_starv_induced_PsiE-like"/>
</dbReference>
<dbReference type="NCBIfam" id="NF002764">
    <property type="entry name" value="PRK02833.1-2"/>
    <property type="match status" value="1"/>
</dbReference>
<dbReference type="NCBIfam" id="NF002765">
    <property type="entry name" value="PRK02833.1-3"/>
    <property type="match status" value="1"/>
</dbReference>
<dbReference type="NCBIfam" id="NF002767">
    <property type="entry name" value="PRK02833.1-5"/>
    <property type="match status" value="1"/>
</dbReference>
<dbReference type="PANTHER" id="PTHR37819">
    <property type="entry name" value="PROTEIN PSIE"/>
    <property type="match status" value="1"/>
</dbReference>
<dbReference type="PANTHER" id="PTHR37819:SF1">
    <property type="entry name" value="PROTEIN PSIE"/>
    <property type="match status" value="1"/>
</dbReference>
<dbReference type="Pfam" id="PF06146">
    <property type="entry name" value="PsiE"/>
    <property type="match status" value="1"/>
</dbReference>
<dbReference type="PIRSF" id="PIRSF029598">
    <property type="entry name" value="PsiE"/>
    <property type="match status" value="1"/>
</dbReference>
<proteinExistence type="inferred from homology"/>
<protein>
    <recommendedName>
        <fullName evidence="1">Protein PsiE</fullName>
    </recommendedName>
</protein>
<keyword id="KW-0997">Cell inner membrane</keyword>
<keyword id="KW-1003">Cell membrane</keyword>
<keyword id="KW-0472">Membrane</keyword>
<keyword id="KW-0812">Transmembrane</keyword>
<keyword id="KW-1133">Transmembrane helix</keyword>